<proteinExistence type="evidence at transcript level"/>
<dbReference type="EMBL" id="AE014134">
    <property type="protein sequence ID" value="AAG22443.2"/>
    <property type="molecule type" value="Genomic_DNA"/>
</dbReference>
<dbReference type="EMBL" id="AY070937">
    <property type="protein sequence ID" value="AAL48559.1"/>
    <property type="molecule type" value="mRNA"/>
</dbReference>
<dbReference type="RefSeq" id="NP_609999.2">
    <property type="nucleotide sequence ID" value="NM_136155.3"/>
</dbReference>
<dbReference type="SMR" id="Q9I7M2"/>
<dbReference type="BioGRID" id="61239">
    <property type="interactions" value="2"/>
</dbReference>
<dbReference type="FunCoup" id="Q9I7M2">
    <property type="interactions" value="958"/>
</dbReference>
<dbReference type="IntAct" id="Q9I7M2">
    <property type="interactions" value="5"/>
</dbReference>
<dbReference type="STRING" id="7227.FBpp0080855"/>
<dbReference type="PaxDb" id="7227-FBpp0080855"/>
<dbReference type="DNASU" id="35263"/>
<dbReference type="EnsemblMetazoa" id="FBtr0081323">
    <property type="protein sequence ID" value="FBpp0080855"/>
    <property type="gene ID" value="FBgn0032818"/>
</dbReference>
<dbReference type="GeneID" id="35263"/>
<dbReference type="KEGG" id="dme:Dmel_CG10628"/>
<dbReference type="UCSC" id="CG10628-RA">
    <property type="organism name" value="d. melanogaster"/>
</dbReference>
<dbReference type="AGR" id="FB:FBgn0032818"/>
<dbReference type="FlyBase" id="FBgn0032818">
    <property type="gene designation" value="CG10628"/>
</dbReference>
<dbReference type="VEuPathDB" id="VectorBase:FBgn0032818"/>
<dbReference type="eggNOG" id="KOG1489">
    <property type="taxonomic scope" value="Eukaryota"/>
</dbReference>
<dbReference type="GeneTree" id="ENSGT00940000155589"/>
<dbReference type="HOGENOM" id="CLU_011747_2_3_1"/>
<dbReference type="InParanoid" id="Q9I7M2"/>
<dbReference type="OMA" id="VFMVDIF"/>
<dbReference type="OrthoDB" id="347018at2759"/>
<dbReference type="PhylomeDB" id="Q9I7M2"/>
<dbReference type="BioGRID-ORCS" id="35263">
    <property type="hits" value="1 hit in 3 CRISPR screens"/>
</dbReference>
<dbReference type="GenomeRNAi" id="35263"/>
<dbReference type="PRO" id="PR:Q9I7M2"/>
<dbReference type="Proteomes" id="UP000000803">
    <property type="component" value="Chromosome 2L"/>
</dbReference>
<dbReference type="Bgee" id="FBgn0032818">
    <property type="expression patterns" value="Expressed in adult Malpighian tubule (Drosophila) and 68 other cell types or tissues"/>
</dbReference>
<dbReference type="ExpressionAtlas" id="Q9I7M2">
    <property type="expression patterns" value="baseline and differential"/>
</dbReference>
<dbReference type="GO" id="GO:0005739">
    <property type="term" value="C:mitochondrion"/>
    <property type="evidence" value="ECO:0000250"/>
    <property type="project" value="FlyBase"/>
</dbReference>
<dbReference type="GO" id="GO:0005730">
    <property type="term" value="C:nucleolus"/>
    <property type="evidence" value="ECO:0007669"/>
    <property type="project" value="UniProtKB-SubCell"/>
</dbReference>
<dbReference type="GO" id="GO:0005525">
    <property type="term" value="F:GTP binding"/>
    <property type="evidence" value="ECO:0000318"/>
    <property type="project" value="GO_Central"/>
</dbReference>
<dbReference type="GO" id="GO:0003924">
    <property type="term" value="F:GTPase activity"/>
    <property type="evidence" value="ECO:0000318"/>
    <property type="project" value="GO_Central"/>
</dbReference>
<dbReference type="GO" id="GO:0000287">
    <property type="term" value="F:magnesium ion binding"/>
    <property type="evidence" value="ECO:0007669"/>
    <property type="project" value="InterPro"/>
</dbReference>
<dbReference type="GO" id="GO:0042254">
    <property type="term" value="P:ribosome biogenesis"/>
    <property type="evidence" value="ECO:0007669"/>
    <property type="project" value="UniProtKB-KW"/>
</dbReference>
<dbReference type="CDD" id="cd01898">
    <property type="entry name" value="Obg"/>
    <property type="match status" value="1"/>
</dbReference>
<dbReference type="Gene3D" id="2.70.210.12">
    <property type="entry name" value="GTP1/OBG domain"/>
    <property type="match status" value="1"/>
</dbReference>
<dbReference type="Gene3D" id="3.40.50.300">
    <property type="entry name" value="P-loop containing nucleotide triphosphate hydrolases"/>
    <property type="match status" value="1"/>
</dbReference>
<dbReference type="InterPro" id="IPR031167">
    <property type="entry name" value="G_OBG"/>
</dbReference>
<dbReference type="InterPro" id="IPR006073">
    <property type="entry name" value="GTP-bd"/>
</dbReference>
<dbReference type="InterPro" id="IPR014100">
    <property type="entry name" value="GTP-bd_Obg/CgtA"/>
</dbReference>
<dbReference type="InterPro" id="IPR006169">
    <property type="entry name" value="GTP1_OBG_dom"/>
</dbReference>
<dbReference type="InterPro" id="IPR036726">
    <property type="entry name" value="GTP1_OBG_dom_sf"/>
</dbReference>
<dbReference type="InterPro" id="IPR045086">
    <property type="entry name" value="OBG_GTPase"/>
</dbReference>
<dbReference type="InterPro" id="IPR027417">
    <property type="entry name" value="P-loop_NTPase"/>
</dbReference>
<dbReference type="PANTHER" id="PTHR11702">
    <property type="entry name" value="DEVELOPMENTALLY REGULATED GTP-BINDING PROTEIN-RELATED"/>
    <property type="match status" value="1"/>
</dbReference>
<dbReference type="PANTHER" id="PTHR11702:SF43">
    <property type="entry name" value="GTP-BINDING PROTEIN 10"/>
    <property type="match status" value="1"/>
</dbReference>
<dbReference type="Pfam" id="PF01018">
    <property type="entry name" value="GTP1_OBG"/>
    <property type="match status" value="1"/>
</dbReference>
<dbReference type="Pfam" id="PF01926">
    <property type="entry name" value="MMR_HSR1"/>
    <property type="match status" value="1"/>
</dbReference>
<dbReference type="PIRSF" id="PIRSF002401">
    <property type="entry name" value="GTP_bd_Obg/CgtA"/>
    <property type="match status" value="1"/>
</dbReference>
<dbReference type="PRINTS" id="PR00326">
    <property type="entry name" value="GTP1OBG"/>
</dbReference>
<dbReference type="SUPFAM" id="SSF82051">
    <property type="entry name" value="Obg GTP-binding protein N-terminal domain"/>
    <property type="match status" value="1"/>
</dbReference>
<dbReference type="SUPFAM" id="SSF52540">
    <property type="entry name" value="P-loop containing nucleoside triphosphate hydrolases"/>
    <property type="match status" value="1"/>
</dbReference>
<dbReference type="PROSITE" id="PS51710">
    <property type="entry name" value="G_OBG"/>
    <property type="match status" value="1"/>
</dbReference>
<dbReference type="PROSITE" id="PS51883">
    <property type="entry name" value="OBG"/>
    <property type="match status" value="1"/>
</dbReference>
<feature type="chain" id="PRO_0000312635" description="GTP-binding protein 10 homolog">
    <location>
        <begin position="1"/>
        <end position="383"/>
    </location>
</feature>
<feature type="domain" description="Obg" evidence="2">
    <location>
        <begin position="22"/>
        <end position="157"/>
    </location>
</feature>
<feature type="domain" description="OBG-type G" evidence="1">
    <location>
        <begin position="158"/>
        <end position="353"/>
    </location>
</feature>
<feature type="binding site" evidence="1">
    <location>
        <begin position="164"/>
        <end position="171"/>
    </location>
    <ligand>
        <name>GTP</name>
        <dbReference type="ChEBI" id="CHEBI:37565"/>
    </ligand>
</feature>
<feature type="binding site" evidence="1">
    <location>
        <begin position="211"/>
        <end position="215"/>
    </location>
    <ligand>
        <name>GTP</name>
        <dbReference type="ChEBI" id="CHEBI:37565"/>
    </ligand>
</feature>
<feature type="binding site" evidence="1">
    <location>
        <begin position="287"/>
        <end position="290"/>
    </location>
    <ligand>
        <name>GTP</name>
        <dbReference type="ChEBI" id="CHEBI:37565"/>
    </ligand>
</feature>
<organism>
    <name type="scientific">Drosophila melanogaster</name>
    <name type="common">Fruit fly</name>
    <dbReference type="NCBI Taxonomy" id="7227"/>
    <lineage>
        <taxon>Eukaryota</taxon>
        <taxon>Metazoa</taxon>
        <taxon>Ecdysozoa</taxon>
        <taxon>Arthropoda</taxon>
        <taxon>Hexapoda</taxon>
        <taxon>Insecta</taxon>
        <taxon>Pterygota</taxon>
        <taxon>Neoptera</taxon>
        <taxon>Endopterygota</taxon>
        <taxon>Diptera</taxon>
        <taxon>Brachycera</taxon>
        <taxon>Muscomorpha</taxon>
        <taxon>Ephydroidea</taxon>
        <taxon>Drosophilidae</taxon>
        <taxon>Drosophila</taxon>
        <taxon>Sophophora</taxon>
    </lineage>
</organism>
<name>GTPBA_DROME</name>
<protein>
    <recommendedName>
        <fullName>GTP-binding protein 10 homolog</fullName>
    </recommendedName>
</protein>
<sequence>MVQIFKFLLKSSKSTGRAHFRPTFLDTLRLAVRGGHGGNGLPKYGGVGGQGGCVYLVAKEGLTLRKVVQGLKDKRVAASSGEDSSKASIFGRRGADQRIEVPVGVQVYDDQQKLIADLDEHEATCIVAGGGTGGCTATNFLGRPGENRTVNLDLKLIADVGLVGFPNAGKSTLLKAVSNAKPKIAAYPFTTIRPQIGTIEYRDLRSITVADLPGLIEGAHANFGMGHKFLKHIERTRLLVFMVDIFGFQLSPKHPHRDCLANVYALNKELELYDPSLLEKPSVLLLNKMDKEGAHEIFTKVKPLVSDLASGLEQCPEELRPKQVLNFDSIVPISAMNSSKITQVKSQLRRTLVRLAEKQFLADEDQVKEKLRQRVGVVGPKIT</sequence>
<keyword id="KW-0342">GTP-binding</keyword>
<keyword id="KW-0547">Nucleotide-binding</keyword>
<keyword id="KW-0539">Nucleus</keyword>
<keyword id="KW-1185">Reference proteome</keyword>
<keyword id="KW-0690">Ribosome biogenesis</keyword>
<gene>
    <name type="ORF">CG10628</name>
</gene>
<comment type="function">
    <text>May be involved in the ribosome maturation process.</text>
</comment>
<comment type="subcellular location">
    <subcellularLocation>
        <location evidence="3">Nucleus</location>
        <location evidence="3">Nucleolus</location>
    </subcellularLocation>
</comment>
<comment type="similarity">
    <text evidence="1">Belongs to the TRAFAC class OBG-HflX-like GTPase superfamily. OBG GTPase family.</text>
</comment>
<reference key="1">
    <citation type="journal article" date="2000" name="Science">
        <title>The genome sequence of Drosophila melanogaster.</title>
        <authorList>
            <person name="Adams M.D."/>
            <person name="Celniker S.E."/>
            <person name="Holt R.A."/>
            <person name="Evans C.A."/>
            <person name="Gocayne J.D."/>
            <person name="Amanatides P.G."/>
            <person name="Scherer S.E."/>
            <person name="Li P.W."/>
            <person name="Hoskins R.A."/>
            <person name="Galle R.F."/>
            <person name="George R.A."/>
            <person name="Lewis S.E."/>
            <person name="Richards S."/>
            <person name="Ashburner M."/>
            <person name="Henderson S.N."/>
            <person name="Sutton G.G."/>
            <person name="Wortman J.R."/>
            <person name="Yandell M.D."/>
            <person name="Zhang Q."/>
            <person name="Chen L.X."/>
            <person name="Brandon R.C."/>
            <person name="Rogers Y.-H.C."/>
            <person name="Blazej R.G."/>
            <person name="Champe M."/>
            <person name="Pfeiffer B.D."/>
            <person name="Wan K.H."/>
            <person name="Doyle C."/>
            <person name="Baxter E.G."/>
            <person name="Helt G."/>
            <person name="Nelson C.R."/>
            <person name="Miklos G.L.G."/>
            <person name="Abril J.F."/>
            <person name="Agbayani A."/>
            <person name="An H.-J."/>
            <person name="Andrews-Pfannkoch C."/>
            <person name="Baldwin D."/>
            <person name="Ballew R.M."/>
            <person name="Basu A."/>
            <person name="Baxendale J."/>
            <person name="Bayraktaroglu L."/>
            <person name="Beasley E.M."/>
            <person name="Beeson K.Y."/>
            <person name="Benos P.V."/>
            <person name="Berman B.P."/>
            <person name="Bhandari D."/>
            <person name="Bolshakov S."/>
            <person name="Borkova D."/>
            <person name="Botchan M.R."/>
            <person name="Bouck J."/>
            <person name="Brokstein P."/>
            <person name="Brottier P."/>
            <person name="Burtis K.C."/>
            <person name="Busam D.A."/>
            <person name="Butler H."/>
            <person name="Cadieu E."/>
            <person name="Center A."/>
            <person name="Chandra I."/>
            <person name="Cherry J.M."/>
            <person name="Cawley S."/>
            <person name="Dahlke C."/>
            <person name="Davenport L.B."/>
            <person name="Davies P."/>
            <person name="de Pablos B."/>
            <person name="Delcher A."/>
            <person name="Deng Z."/>
            <person name="Mays A.D."/>
            <person name="Dew I."/>
            <person name="Dietz S.M."/>
            <person name="Dodson K."/>
            <person name="Doup L.E."/>
            <person name="Downes M."/>
            <person name="Dugan-Rocha S."/>
            <person name="Dunkov B.C."/>
            <person name="Dunn P."/>
            <person name="Durbin K.J."/>
            <person name="Evangelista C.C."/>
            <person name="Ferraz C."/>
            <person name="Ferriera S."/>
            <person name="Fleischmann W."/>
            <person name="Fosler C."/>
            <person name="Gabrielian A.E."/>
            <person name="Garg N.S."/>
            <person name="Gelbart W.M."/>
            <person name="Glasser K."/>
            <person name="Glodek A."/>
            <person name="Gong F."/>
            <person name="Gorrell J.H."/>
            <person name="Gu Z."/>
            <person name="Guan P."/>
            <person name="Harris M."/>
            <person name="Harris N.L."/>
            <person name="Harvey D.A."/>
            <person name="Heiman T.J."/>
            <person name="Hernandez J.R."/>
            <person name="Houck J."/>
            <person name="Hostin D."/>
            <person name="Houston K.A."/>
            <person name="Howland T.J."/>
            <person name="Wei M.-H."/>
            <person name="Ibegwam C."/>
            <person name="Jalali M."/>
            <person name="Kalush F."/>
            <person name="Karpen G.H."/>
            <person name="Ke Z."/>
            <person name="Kennison J.A."/>
            <person name="Ketchum K.A."/>
            <person name="Kimmel B.E."/>
            <person name="Kodira C.D."/>
            <person name="Kraft C.L."/>
            <person name="Kravitz S."/>
            <person name="Kulp D."/>
            <person name="Lai Z."/>
            <person name="Lasko P."/>
            <person name="Lei Y."/>
            <person name="Levitsky A.A."/>
            <person name="Li J.H."/>
            <person name="Li Z."/>
            <person name="Liang Y."/>
            <person name="Lin X."/>
            <person name="Liu X."/>
            <person name="Mattei B."/>
            <person name="McIntosh T.C."/>
            <person name="McLeod M.P."/>
            <person name="McPherson D."/>
            <person name="Merkulov G."/>
            <person name="Milshina N.V."/>
            <person name="Mobarry C."/>
            <person name="Morris J."/>
            <person name="Moshrefi A."/>
            <person name="Mount S.M."/>
            <person name="Moy M."/>
            <person name="Murphy B."/>
            <person name="Murphy L."/>
            <person name="Muzny D.M."/>
            <person name="Nelson D.L."/>
            <person name="Nelson D.R."/>
            <person name="Nelson K.A."/>
            <person name="Nixon K."/>
            <person name="Nusskern D.R."/>
            <person name="Pacleb J.M."/>
            <person name="Palazzolo M."/>
            <person name="Pittman G.S."/>
            <person name="Pan S."/>
            <person name="Pollard J."/>
            <person name="Puri V."/>
            <person name="Reese M.G."/>
            <person name="Reinert K."/>
            <person name="Remington K."/>
            <person name="Saunders R.D.C."/>
            <person name="Scheeler F."/>
            <person name="Shen H."/>
            <person name="Shue B.C."/>
            <person name="Siden-Kiamos I."/>
            <person name="Simpson M."/>
            <person name="Skupski M.P."/>
            <person name="Smith T.J."/>
            <person name="Spier E."/>
            <person name="Spradling A.C."/>
            <person name="Stapleton M."/>
            <person name="Strong R."/>
            <person name="Sun E."/>
            <person name="Svirskas R."/>
            <person name="Tector C."/>
            <person name="Turner R."/>
            <person name="Venter E."/>
            <person name="Wang A.H."/>
            <person name="Wang X."/>
            <person name="Wang Z.-Y."/>
            <person name="Wassarman D.A."/>
            <person name="Weinstock G.M."/>
            <person name="Weissenbach J."/>
            <person name="Williams S.M."/>
            <person name="Woodage T."/>
            <person name="Worley K.C."/>
            <person name="Wu D."/>
            <person name="Yang S."/>
            <person name="Yao Q.A."/>
            <person name="Ye J."/>
            <person name="Yeh R.-F."/>
            <person name="Zaveri J.S."/>
            <person name="Zhan M."/>
            <person name="Zhang G."/>
            <person name="Zhao Q."/>
            <person name="Zheng L."/>
            <person name="Zheng X.H."/>
            <person name="Zhong F.N."/>
            <person name="Zhong W."/>
            <person name="Zhou X."/>
            <person name="Zhu S.C."/>
            <person name="Zhu X."/>
            <person name="Smith H.O."/>
            <person name="Gibbs R.A."/>
            <person name="Myers E.W."/>
            <person name="Rubin G.M."/>
            <person name="Venter J.C."/>
        </authorList>
    </citation>
    <scope>NUCLEOTIDE SEQUENCE [LARGE SCALE GENOMIC DNA]</scope>
    <source>
        <strain>Berkeley</strain>
    </source>
</reference>
<reference key="2">
    <citation type="journal article" date="2002" name="Genome Biol.">
        <title>Annotation of the Drosophila melanogaster euchromatic genome: a systematic review.</title>
        <authorList>
            <person name="Misra S."/>
            <person name="Crosby M.A."/>
            <person name="Mungall C.J."/>
            <person name="Matthews B.B."/>
            <person name="Campbell K.S."/>
            <person name="Hradecky P."/>
            <person name="Huang Y."/>
            <person name="Kaminker J.S."/>
            <person name="Millburn G.H."/>
            <person name="Prochnik S.E."/>
            <person name="Smith C.D."/>
            <person name="Tupy J.L."/>
            <person name="Whitfield E.J."/>
            <person name="Bayraktaroglu L."/>
            <person name="Berman B.P."/>
            <person name="Bettencourt B.R."/>
            <person name="Celniker S.E."/>
            <person name="de Grey A.D.N.J."/>
            <person name="Drysdale R.A."/>
            <person name="Harris N.L."/>
            <person name="Richter J."/>
            <person name="Russo S."/>
            <person name="Schroeder A.J."/>
            <person name="Shu S.Q."/>
            <person name="Stapleton M."/>
            <person name="Yamada C."/>
            <person name="Ashburner M."/>
            <person name="Gelbart W.M."/>
            <person name="Rubin G.M."/>
            <person name="Lewis S.E."/>
        </authorList>
    </citation>
    <scope>GENOME REANNOTATION</scope>
    <source>
        <strain>Berkeley</strain>
    </source>
</reference>
<reference key="3">
    <citation type="journal article" date="2002" name="Genome Biol.">
        <title>A Drosophila full-length cDNA resource.</title>
        <authorList>
            <person name="Stapleton M."/>
            <person name="Carlson J.W."/>
            <person name="Brokstein P."/>
            <person name="Yu C."/>
            <person name="Champe M."/>
            <person name="George R.A."/>
            <person name="Guarin H."/>
            <person name="Kronmiller B."/>
            <person name="Pacleb J.M."/>
            <person name="Park S."/>
            <person name="Wan K.H."/>
            <person name="Rubin G.M."/>
            <person name="Celniker S.E."/>
        </authorList>
    </citation>
    <scope>NUCLEOTIDE SEQUENCE [LARGE SCALE MRNA]</scope>
    <source>
        <strain>Berkeley</strain>
        <tissue>Embryo</tissue>
    </source>
</reference>
<accession>Q9I7M2</accession>
<accession>Q8SZE0</accession>
<evidence type="ECO:0000255" key="1">
    <source>
        <dbReference type="PROSITE-ProRule" id="PRU01047"/>
    </source>
</evidence>
<evidence type="ECO:0000255" key="2">
    <source>
        <dbReference type="PROSITE-ProRule" id="PRU01231"/>
    </source>
</evidence>
<evidence type="ECO:0000305" key="3"/>